<organism>
    <name type="scientific">Stichodactyla helianthus</name>
    <name type="common">Sun anemone</name>
    <name type="synonym">Stoichactis helianthus</name>
    <dbReference type="NCBI Taxonomy" id="6123"/>
    <lineage>
        <taxon>Eukaryota</taxon>
        <taxon>Metazoa</taxon>
        <taxon>Cnidaria</taxon>
        <taxon>Anthozoa</taxon>
        <taxon>Hexacorallia</taxon>
        <taxon>Actiniaria</taxon>
        <taxon>Stichodactylidae</taxon>
        <taxon>Stichodactyla</taxon>
    </lineage>
</organism>
<protein>
    <recommendedName>
        <fullName evidence="13">DELTA-stichotoxin-She4a</fullName>
        <shortName evidence="13">DELTA-SHTX-She4a</shortName>
    </recommendedName>
    <alternativeName>
        <fullName evidence="11">Cytolysin sticholysin I</fullName>
        <shortName evidence="10">St I</shortName>
        <shortName evidence="11">St-I</shortName>
    </alternativeName>
    <alternativeName>
        <fullName evidence="12">Sticholysin I</fullName>
        <shortName evidence="12">Stn I</shortName>
    </alternativeName>
    <alternativeName>
        <fullName evidence="15">Sticholysin-1</fullName>
        <shortName evidence="14">STCH</shortName>
    </alternativeName>
</protein>
<feature type="chain" id="PRO_0000221537" description="DELTA-stichotoxin-She4a" evidence="7">
    <location>
        <begin position="1"/>
        <end position="176"/>
    </location>
</feature>
<feature type="region of interest" description="Plays an important role in the hemolytic activity" evidence="3">
    <location>
        <begin position="2"/>
        <end position="11"/>
    </location>
</feature>
<feature type="region of interest" description="N-terminal region" evidence="4">
    <location>
        <begin position="10"/>
        <end position="29"/>
    </location>
</feature>
<feature type="region of interest" description="Trp-rich region, which is important for the binding to lipid membrane" evidence="4">
    <location>
        <begin position="104"/>
        <end position="119"/>
    </location>
</feature>
<feature type="short sequence motif" description="Cell attachment site" evidence="5">
    <location>
        <begin position="142"/>
        <end position="144"/>
    </location>
</feature>
<feature type="binding site" evidence="3">
    <location>
        <position position="53"/>
    </location>
    <ligand>
        <name>phosphocholine</name>
        <dbReference type="ChEBI" id="CHEBI:295975"/>
    </ligand>
</feature>
<feature type="binding site" evidence="3">
    <location>
        <position position="86"/>
    </location>
    <ligand>
        <name>phosphocholine</name>
        <dbReference type="ChEBI" id="CHEBI:295975"/>
    </ligand>
</feature>
<feature type="binding site" evidence="3">
    <location>
        <position position="104"/>
    </location>
    <ligand>
        <name>phosphocholine</name>
        <dbReference type="ChEBI" id="CHEBI:295975"/>
    </ligand>
</feature>
<feature type="binding site" evidence="3">
    <location>
        <position position="106"/>
    </location>
    <ligand>
        <name>phosphocholine</name>
        <dbReference type="ChEBI" id="CHEBI:295975"/>
    </ligand>
</feature>
<feature type="binding site" evidence="3">
    <location>
        <position position="132"/>
    </location>
    <ligand>
        <name>phosphocholine</name>
        <dbReference type="ChEBI" id="CHEBI:295975"/>
    </ligand>
</feature>
<feature type="binding site" evidence="3">
    <location>
        <position position="136"/>
    </location>
    <ligand>
        <name>phosphocholine</name>
        <dbReference type="ChEBI" id="CHEBI:295975"/>
    </ligand>
</feature>
<feature type="binding site" evidence="3">
    <location>
        <position position="137"/>
    </location>
    <ligand>
        <name>phosphocholine</name>
        <dbReference type="ChEBI" id="CHEBI:295975"/>
    </ligand>
</feature>
<feature type="site" description="Important in the initial contact with the lipid membrane" evidence="4">
    <location>
        <position position="111"/>
    </location>
</feature>
<feature type="site" description="Important in the initial contact with the lipid membrane" evidence="4">
    <location>
        <position position="112"/>
    </location>
</feature>
<feature type="site" description="Interacts with the lipid membrane" evidence="1">
    <location>
        <position position="142"/>
    </location>
</feature>
<feature type="mutagenesis site" description="Shows larger hemolytic activity in human red blood cells, but no change in capacity to form pore." evidence="9">
    <original>E</original>
    <variation>Q</variation>
    <location>
        <position position="16"/>
    </location>
</feature>
<feature type="turn" evidence="16">
    <location>
        <begin position="10"/>
        <end position="12"/>
    </location>
</feature>
<feature type="helix" evidence="16">
    <location>
        <begin position="15"/>
        <end position="24"/>
    </location>
</feature>
<feature type="strand" evidence="16">
    <location>
        <begin position="28"/>
        <end position="38"/>
    </location>
</feature>
<feature type="strand" evidence="16">
    <location>
        <begin position="40"/>
        <end position="42"/>
    </location>
</feature>
<feature type="strand" evidence="16">
    <location>
        <begin position="44"/>
        <end position="50"/>
    </location>
</feature>
<feature type="strand" evidence="16">
    <location>
        <begin position="52"/>
        <end position="54"/>
    </location>
</feature>
<feature type="strand" evidence="16">
    <location>
        <begin position="62"/>
        <end position="64"/>
    </location>
</feature>
<feature type="strand" evidence="16">
    <location>
        <begin position="68"/>
        <end position="75"/>
    </location>
</feature>
<feature type="strand" evidence="16">
    <location>
        <begin position="77"/>
        <end position="82"/>
    </location>
</feature>
<feature type="strand" evidence="16">
    <location>
        <begin position="84"/>
        <end position="93"/>
    </location>
</feature>
<feature type="turn" evidence="16">
    <location>
        <begin position="94"/>
        <end position="96"/>
    </location>
</feature>
<feature type="strand" evidence="16">
    <location>
        <begin position="97"/>
        <end position="105"/>
    </location>
</feature>
<feature type="turn" evidence="16">
    <location>
        <begin position="109"/>
        <end position="111"/>
    </location>
</feature>
<feature type="strand" evidence="16">
    <location>
        <begin position="117"/>
        <end position="124"/>
    </location>
</feature>
<feature type="helix" evidence="16">
    <location>
        <begin position="129"/>
        <end position="136"/>
    </location>
</feature>
<feature type="turn" evidence="16">
    <location>
        <begin position="153"/>
        <end position="155"/>
    </location>
</feature>
<feature type="strand" evidence="16">
    <location>
        <begin position="156"/>
        <end position="161"/>
    </location>
</feature>
<feature type="strand" evidence="16">
    <location>
        <begin position="164"/>
        <end position="167"/>
    </location>
</feature>
<feature type="strand" evidence="16">
    <location>
        <begin position="170"/>
        <end position="174"/>
    </location>
</feature>
<accession>P81662</accession>
<accession>Q9N601</accession>
<reference key="1">
    <citation type="journal article" date="2001" name="Toxicon">
        <title>Primary structure of two cytolysin isoforms from Stichodactyla helianthus differing in their hemolytic activity.</title>
        <authorList>
            <person name="Huerta V."/>
            <person name="Morera V."/>
            <person name="Guanche Y."/>
            <person name="Chinea G."/>
            <person name="Gonzalez L.J."/>
            <person name="Betancourt L."/>
            <person name="Martinez D."/>
            <person name="Alvarez C."/>
            <person name="Lanio M.E."/>
            <person name="Besada V."/>
        </authorList>
    </citation>
    <scope>PROTEIN SEQUENCE</scope>
    <scope>MASS SPECTROMETRY</scope>
</reference>
<reference key="2">
    <citation type="submission" date="2000-10" db="EMBL/GenBank/DDBJ databases">
        <title>Cloning and expression of sticholysins from sea aemone, Stichodactyla helianthus.</title>
        <authorList>
            <person name="de los Rios V."/>
            <person name="Onaderra M."/>
            <person name="Martinez del Pozo A."/>
            <person name="Mancheno J.M."/>
            <person name="Gavilanes J.G."/>
        </authorList>
    </citation>
    <scope>NUCLEOTIDE SEQUENCE [GENOMIC DNA] OF 9-176</scope>
</reference>
<reference key="3">
    <citation type="journal article" date="2001" name="Toxicon">
        <title>Purification and characterization of two hemolysins from Stichodactyla helianthus.</title>
        <authorList>
            <person name="Lanio M.E."/>
            <person name="Morera V."/>
            <person name="Alvarez C."/>
            <person name="Tejuca M."/>
            <person name="Gomez T."/>
            <person name="Pazos F."/>
            <person name="Besada V."/>
            <person name="Martinez D."/>
            <person name="Huerta V."/>
            <person name="Padron G."/>
            <person name="Chavez M.A."/>
        </authorList>
    </citation>
    <scope>FUNCTION</scope>
</reference>
<reference key="4">
    <citation type="journal article" date="2001" name="Toxicon">
        <title>Properties of St I and St II, two isotoxins isolated from Stichodactyla helianthus: a comparison.</title>
        <authorList>
            <person name="Martinez D."/>
            <person name="Campos A.M."/>
            <person name="Pazos F."/>
            <person name="Alvarez C."/>
            <person name="Lanio M.E."/>
            <person name="Casallanovo F."/>
            <person name="Schreier S."/>
            <person name="Salinas R.K."/>
            <person name="Vergara C."/>
            <person name="Lissi E."/>
        </authorList>
    </citation>
    <scope>FUNCTION</scope>
</reference>
<reference key="5">
    <citation type="journal article" date="2006" name="Toxicon">
        <title>Structural and functional characterization of a recombinant sticholysin I (rSt I) from the sea anemone Stichodactyla helianthus.</title>
        <authorList>
            <person name="Pazos F."/>
            <person name="Valle A."/>
            <person name="Martinez D."/>
            <person name="Ramirez A."/>
            <person name="Calderon L."/>
            <person name="Pupo A."/>
            <person name="Tejuca M."/>
            <person name="Morera V."/>
            <person name="Campos J."/>
            <person name="Fando R."/>
            <person name="Dyszy F."/>
            <person name="Schreier S."/>
            <person name="Horjales E."/>
            <person name="Alvarez C."/>
            <person name="Lanio M.E."/>
            <person name="Lissi E."/>
        </authorList>
    </citation>
    <scope>MUTAGENESIS OF GLU-16</scope>
</reference>
<reference key="6">
    <citation type="journal article" date="2009" name="Toxicon">
        <title>Molecular mechanism of pore formation by actinoporins.</title>
        <authorList>
            <person name="Kristan K.C."/>
            <person name="Viero G."/>
            <person name="Dalla Serra M."/>
            <person name="Macek P."/>
            <person name="Anderluh G."/>
        </authorList>
    </citation>
    <scope>REVIEW</scope>
</reference>
<reference key="7">
    <citation type="journal article" date="2012" name="Toxicon">
        <title>Development of a rational nomenclature for naming peptide and protein toxins from sea anemones.</title>
        <authorList>
            <person name="Oliveira J.S."/>
            <person name="Fuentes-Silva D."/>
            <person name="King G.F."/>
        </authorList>
    </citation>
    <scope>NOMENCLATURE</scope>
</reference>
<reference key="8">
    <citation type="journal article" date="2009" name="Biomol. NMR. Assign.">
        <title>1H, 13C, and 15N NMR assignments of the actinoporin Sticholysin I.</title>
        <authorList>
            <person name="Castrillo I."/>
            <person name="Alegre-Cebollada J."/>
            <person name="del Pozo A.M."/>
            <person name="Gavilanes J.G."/>
            <person name="Santoro J."/>
            <person name="Bruix M."/>
        </authorList>
    </citation>
    <scope>STRUCTURE BY NMR</scope>
</reference>
<evidence type="ECO:0000250" key="1"/>
<evidence type="ECO:0000250" key="2">
    <source>
        <dbReference type="UniProtKB" id="B9W5G6"/>
    </source>
</evidence>
<evidence type="ECO:0000250" key="3">
    <source>
        <dbReference type="UniProtKB" id="P07845"/>
    </source>
</evidence>
<evidence type="ECO:0000250" key="4">
    <source>
        <dbReference type="UniProtKB" id="P61914"/>
    </source>
</evidence>
<evidence type="ECO:0000255" key="5"/>
<evidence type="ECO:0000269" key="6">
    <source>
    </source>
</evidence>
<evidence type="ECO:0000269" key="7">
    <source>
    </source>
</evidence>
<evidence type="ECO:0000269" key="8">
    <source>
    </source>
</evidence>
<evidence type="ECO:0000269" key="9">
    <source>
    </source>
</evidence>
<evidence type="ECO:0000303" key="10">
    <source>
    </source>
</evidence>
<evidence type="ECO:0000303" key="11">
    <source>
    </source>
</evidence>
<evidence type="ECO:0000303" key="12">
    <source>
    </source>
</evidence>
<evidence type="ECO:0000303" key="13">
    <source>
    </source>
</evidence>
<evidence type="ECO:0000303" key="14">
    <source ref="2"/>
</evidence>
<evidence type="ECO:0000305" key="15"/>
<evidence type="ECO:0007829" key="16">
    <source>
        <dbReference type="PDB" id="2KS4"/>
    </source>
</evidence>
<proteinExistence type="evidence at protein level"/>
<keyword id="KW-0002">3D-structure</keyword>
<keyword id="KW-0204">Cytolysis</keyword>
<keyword id="KW-0903">Direct protein sequencing</keyword>
<keyword id="KW-0406">Ion transport</keyword>
<keyword id="KW-0472">Membrane</keyword>
<keyword id="KW-0166">Nematocyst</keyword>
<keyword id="KW-0964">Secreted</keyword>
<keyword id="KW-1052">Target cell membrane</keyword>
<keyword id="KW-1053">Target membrane</keyword>
<keyword id="KW-0800">Toxin</keyword>
<keyword id="KW-0812">Transmembrane</keyword>
<keyword id="KW-0813">Transport</keyword>
<name>ACTP1_STIHL</name>
<dbReference type="EMBL" id="AJ009931">
    <property type="protein sequence ID" value="CAC00651.2"/>
    <property type="molecule type" value="Genomic_DNA"/>
</dbReference>
<dbReference type="PDB" id="2KS4">
    <property type="method" value="NMR"/>
    <property type="chains" value="A=1-176"/>
</dbReference>
<dbReference type="PDBsum" id="2KS4"/>
<dbReference type="BMRB" id="P81662"/>
<dbReference type="SMR" id="P81662"/>
<dbReference type="TCDB" id="1.C.38.1.2">
    <property type="family name" value="the pore-forming equinatoxin (equinatoxin) family"/>
</dbReference>
<dbReference type="EvolutionaryTrace" id="P81662"/>
<dbReference type="GO" id="GO:0005576">
    <property type="term" value="C:extracellular region"/>
    <property type="evidence" value="ECO:0007669"/>
    <property type="project" value="UniProtKB-SubCell"/>
</dbReference>
<dbReference type="GO" id="GO:0042151">
    <property type="term" value="C:nematocyst"/>
    <property type="evidence" value="ECO:0007669"/>
    <property type="project" value="UniProtKB-SubCell"/>
</dbReference>
<dbReference type="GO" id="GO:0044218">
    <property type="term" value="C:other organism cell membrane"/>
    <property type="evidence" value="ECO:0007669"/>
    <property type="project" value="UniProtKB-KW"/>
</dbReference>
<dbReference type="GO" id="GO:0046930">
    <property type="term" value="C:pore complex"/>
    <property type="evidence" value="ECO:0007669"/>
    <property type="project" value="InterPro"/>
</dbReference>
<dbReference type="GO" id="GO:0015267">
    <property type="term" value="F:channel activity"/>
    <property type="evidence" value="ECO:0007669"/>
    <property type="project" value="InterPro"/>
</dbReference>
<dbReference type="GO" id="GO:0090729">
    <property type="term" value="F:toxin activity"/>
    <property type="evidence" value="ECO:0007669"/>
    <property type="project" value="UniProtKB-KW"/>
</dbReference>
<dbReference type="GO" id="GO:0051715">
    <property type="term" value="P:cytolysis in another organism"/>
    <property type="evidence" value="ECO:0007669"/>
    <property type="project" value="InterPro"/>
</dbReference>
<dbReference type="GO" id="GO:0006812">
    <property type="term" value="P:monoatomic cation transport"/>
    <property type="evidence" value="ECO:0007669"/>
    <property type="project" value="InterPro"/>
</dbReference>
<dbReference type="GO" id="GO:0046931">
    <property type="term" value="P:pore complex assembly"/>
    <property type="evidence" value="ECO:0007669"/>
    <property type="project" value="InterPro"/>
</dbReference>
<dbReference type="FunFam" id="2.60.270.20:FF:000001">
    <property type="entry name" value="DELTA-actitoxin-Afr1a"/>
    <property type="match status" value="1"/>
</dbReference>
<dbReference type="Gene3D" id="2.60.270.20">
    <property type="entry name" value="Cytolysin/lectin"/>
    <property type="match status" value="1"/>
</dbReference>
<dbReference type="InterPro" id="IPR050677">
    <property type="entry name" value="Actinoporin_PFT"/>
</dbReference>
<dbReference type="InterPro" id="IPR009104">
    <property type="entry name" value="Anemon_actinoporin-like"/>
</dbReference>
<dbReference type="InterPro" id="IPR015926">
    <property type="entry name" value="Cytolysin/lectin"/>
</dbReference>
<dbReference type="PANTHER" id="PTHR40388">
    <property type="entry name" value="BRYOPORIN"/>
    <property type="match status" value="1"/>
</dbReference>
<dbReference type="PANTHER" id="PTHR40388:SF1">
    <property type="entry name" value="BRYOPORIN"/>
    <property type="match status" value="1"/>
</dbReference>
<dbReference type="Pfam" id="PF06369">
    <property type="entry name" value="Anemone_cytotox"/>
    <property type="match status" value="1"/>
</dbReference>
<dbReference type="SUPFAM" id="SSF63724">
    <property type="entry name" value="Cytolysin/lectin"/>
    <property type="match status" value="1"/>
</dbReference>
<sequence>SELAGTIIDGASLTFEVLDKVLGELGKVSRKIAVGIDNESGGTWTALNAYFRSGTTDVILPEVVPNTKALLYSGRKSSGPVATGAVAAFAYYMSNGNTLGVMFSVPFDYNWYSNWWDVKIYPGKRRADQGMYEDMYYGNPYRGDNGWYQKNLGYGLRMKGIMTSAGEAKMQIKISR</sequence>
<comment type="function">
    <text evidence="6 8">Pore-forming protein that forms cations-selective hydrophilic pores of around 1 nm and causes cardiac stimulation and cytolysis. Pore formation is a multi-step process that involves specific recognition of membrane sphingomyelin (but neither cholesterol nor phosphatidylcholine) using aromatic rich region and adjacent phosphocholine (POC) binding site, firm binding to the membrane (mainly driven by hydrophobic interactions) accompanied by the transfer of the N-terminal region to the lipid-water interface and finally pore formation after oligomerization of monomers. Cytolytic effects include red blood cells hemolysis, platelet aggregation and lysis, cytotoxic and cytostatic effects on fibroblasts. Lethality in mammals has been ascribed to severe vasospasm of coronary vessels, cardiac arrhythmia, and inotropic effects.</text>
</comment>
<comment type="subunit">
    <text evidence="2">Octamer or nonamer in membranes. Monomer in the soluble state.</text>
</comment>
<comment type="subcellular location">
    <subcellularLocation>
        <location evidence="2">Secreted</location>
    </subcellularLocation>
    <subcellularLocation>
        <location evidence="3">Nematocyst</location>
    </subcellularLocation>
    <subcellularLocation>
        <location evidence="2">Target cell membrane</location>
    </subcellularLocation>
    <text evidence="2">Forms an alpha-helical membrane channel in the prey.</text>
</comment>
<comment type="domain">
    <text evidence="4">Composed of a long N-terminal alpha-helix and a core region rich in beta-sheet structures. Before the pore formation, the alpha-helix binds the lipid membrane, partitions into the lipid-water interface and stabilizes the monomeric molecule on the membrane. Finally, it traverses the bilayer, thus forming the transmembrane pore.</text>
</comment>
<comment type="mass spectrometry"/>
<comment type="similarity">
    <text evidence="15">Belongs to the actinoporin family. Sea anemone subfamily.</text>
</comment>